<accession>P28114</accession>
<reference key="1">
    <citation type="journal article" date="1992" name="Proc. Natl. Acad. Sci. U.S.A.">
        <title>Diversification of the Wnt gene family on the ancestral lineage of vertebrates.</title>
        <authorList>
            <person name="Sidow A."/>
        </authorList>
    </citation>
    <scope>NUCLEOTIDE SEQUENCE [GENOMIC DNA]</scope>
</reference>
<sequence length="123" mass="14048">SGSCEVKTCWVAQPDFRSIGDHLKDKYDSASEMVVEKHKEARGWVETLRPKYPLFKPPTDRDLIYYERSPNFCDPNSETGSFGTKDRVCNLTSHGIDGCDLLCCGRGHNTRTEKRKDKCHCVF</sequence>
<name>WNT3_EPTST</name>
<dbReference type="EMBL" id="M91264">
    <property type="protein sequence ID" value="AAA49246.1"/>
    <property type="molecule type" value="Genomic_DNA"/>
</dbReference>
<dbReference type="SMR" id="P28114"/>
<dbReference type="GlyCosmos" id="P28114">
    <property type="glycosylation" value="1 site, No reported glycans"/>
</dbReference>
<dbReference type="GO" id="GO:0005615">
    <property type="term" value="C:extracellular space"/>
    <property type="evidence" value="ECO:0007669"/>
    <property type="project" value="TreeGrafter"/>
</dbReference>
<dbReference type="GO" id="GO:0005125">
    <property type="term" value="F:cytokine activity"/>
    <property type="evidence" value="ECO:0007669"/>
    <property type="project" value="TreeGrafter"/>
</dbReference>
<dbReference type="GO" id="GO:0005109">
    <property type="term" value="F:frizzled binding"/>
    <property type="evidence" value="ECO:0007669"/>
    <property type="project" value="TreeGrafter"/>
</dbReference>
<dbReference type="GO" id="GO:0060070">
    <property type="term" value="P:canonical Wnt signaling pathway"/>
    <property type="evidence" value="ECO:0007669"/>
    <property type="project" value="TreeGrafter"/>
</dbReference>
<dbReference type="GO" id="GO:0045165">
    <property type="term" value="P:cell fate commitment"/>
    <property type="evidence" value="ECO:0007669"/>
    <property type="project" value="TreeGrafter"/>
</dbReference>
<dbReference type="GO" id="GO:0030182">
    <property type="term" value="P:neuron differentiation"/>
    <property type="evidence" value="ECO:0007669"/>
    <property type="project" value="TreeGrafter"/>
</dbReference>
<dbReference type="FunFam" id="3.30.2460.20:FF:000009">
    <property type="entry name" value="Protein Wnt-3a"/>
    <property type="match status" value="1"/>
</dbReference>
<dbReference type="Gene3D" id="3.30.2460.20">
    <property type="match status" value="1"/>
</dbReference>
<dbReference type="InterPro" id="IPR005817">
    <property type="entry name" value="Wnt"/>
</dbReference>
<dbReference type="InterPro" id="IPR043158">
    <property type="entry name" value="Wnt_C"/>
</dbReference>
<dbReference type="PANTHER" id="PTHR12027:SF100">
    <property type="entry name" value="PROTEIN WNT"/>
    <property type="match status" value="1"/>
</dbReference>
<dbReference type="PANTHER" id="PTHR12027">
    <property type="entry name" value="WNT RELATED"/>
    <property type="match status" value="1"/>
</dbReference>
<dbReference type="Pfam" id="PF00110">
    <property type="entry name" value="wnt"/>
    <property type="match status" value="1"/>
</dbReference>
<dbReference type="SMART" id="SM00097">
    <property type="entry name" value="WNT1"/>
    <property type="match status" value="1"/>
</dbReference>
<keyword id="KW-0217">Developmental protein</keyword>
<keyword id="KW-1015">Disulfide bond</keyword>
<keyword id="KW-0272">Extracellular matrix</keyword>
<keyword id="KW-0325">Glycoprotein</keyword>
<keyword id="KW-0449">Lipoprotein</keyword>
<keyword id="KW-0964">Secreted</keyword>
<keyword id="KW-0879">Wnt signaling pathway</keyword>
<evidence type="ECO:0000250" key="1">
    <source>
        <dbReference type="UniProtKB" id="P17553"/>
    </source>
</evidence>
<evidence type="ECO:0000250" key="2">
    <source>
        <dbReference type="UniProtKB" id="P27467"/>
    </source>
</evidence>
<evidence type="ECO:0000250" key="3">
    <source>
        <dbReference type="UniProtKB" id="P28026"/>
    </source>
</evidence>
<evidence type="ECO:0000250" key="4">
    <source>
        <dbReference type="UniProtKB" id="P56703"/>
    </source>
</evidence>
<evidence type="ECO:0000250" key="5">
    <source>
        <dbReference type="UniProtKB" id="P56704"/>
    </source>
</evidence>
<evidence type="ECO:0000255" key="6"/>
<evidence type="ECO:0000305" key="7"/>
<proteinExistence type="inferred from homology"/>
<protein>
    <recommendedName>
        <fullName>Protein Wnt-3</fullName>
    </recommendedName>
</protein>
<gene>
    <name type="primary">WNT-3</name>
</gene>
<organism>
    <name type="scientific">Eptatretus stoutii</name>
    <name type="common">Pacific hagfish</name>
    <dbReference type="NCBI Taxonomy" id="7765"/>
    <lineage>
        <taxon>Eukaryota</taxon>
        <taxon>Metazoa</taxon>
        <taxon>Chordata</taxon>
        <taxon>Craniata</taxon>
        <taxon>Vertebrata</taxon>
        <taxon>Cyclostomata</taxon>
        <taxon>Myxini</taxon>
        <taxon>Myxiniformes</taxon>
        <taxon>Myxinidae</taxon>
        <taxon>Eptatretinae</taxon>
        <taxon>Eptatretus</taxon>
    </lineage>
</organism>
<comment type="function">
    <text evidence="1 4">Ligand for members of the frizzled family of seven transmembrane receptors (By similarity). Functions in the canonical Wnt signaling pathway that results in activation of transcription factors of the TCF/LEF family (By similarity). Required for normal embryonic development (By similarity).</text>
</comment>
<comment type="subcellular location">
    <subcellularLocation>
        <location evidence="4">Secreted</location>
        <location evidence="4">Extracellular space</location>
        <location evidence="4">Extracellular matrix</location>
    </subcellularLocation>
    <subcellularLocation>
        <location evidence="4">Secreted</location>
    </subcellularLocation>
</comment>
<comment type="PTM">
    <text evidence="2 5">Palmitoleoylation is required for efficient binding to frizzled receptors. Depalmitoleoylation leads to Wnt signaling pathway inhibition.</text>
</comment>
<comment type="similarity">
    <text evidence="7">Belongs to the Wnt family.</text>
</comment>
<feature type="chain" id="PRO_0000200611" description="Protein Wnt-3">
    <location>
        <begin position="1" status="less than"/>
        <end position="123" status="greater than"/>
    </location>
</feature>
<feature type="lipid moiety-binding region" description="O-palmitoleoyl serine; by PORCN" evidence="5">
    <location>
        <position position="1"/>
    </location>
</feature>
<feature type="glycosylation site" description="N-linked (GlcNAc...) asparagine" evidence="6">
    <location>
        <position position="90"/>
    </location>
</feature>
<feature type="disulfide bond" evidence="3">
    <location>
        <begin position="89"/>
        <end position="104"/>
    </location>
</feature>
<feature type="non-terminal residue">
    <location>
        <position position="1"/>
    </location>
</feature>
<feature type="non-terminal residue">
    <location>
        <position position="123"/>
    </location>
</feature>